<accession>P08449</accession>
<name>ATPA_SYNP6</name>
<comment type="function">
    <text evidence="2">Produces ATP from ADP in the presence of a proton gradient across the membrane. The alpha chain is a regulatory subunit.</text>
</comment>
<comment type="catalytic activity">
    <reaction evidence="2">
        <text>ATP + H2O + 4 H(+)(in) = ADP + phosphate + 5 H(+)(out)</text>
        <dbReference type="Rhea" id="RHEA:57720"/>
        <dbReference type="ChEBI" id="CHEBI:15377"/>
        <dbReference type="ChEBI" id="CHEBI:15378"/>
        <dbReference type="ChEBI" id="CHEBI:30616"/>
        <dbReference type="ChEBI" id="CHEBI:43474"/>
        <dbReference type="ChEBI" id="CHEBI:456216"/>
        <dbReference type="EC" id="7.1.2.2"/>
    </reaction>
</comment>
<comment type="subunit">
    <text evidence="1">F-type ATPases have 2 components, CF(1) - the catalytic core - and CF(0) - the membrane proton channel. CF(1) has five subunits: alpha(3), beta(3), gamma(1), delta(1), epsilon(1). CF(0) has four main subunits: a(1), b(1), b'(1) and c(9-12) (By similarity).</text>
</comment>
<comment type="subcellular location">
    <subcellularLocation>
        <location evidence="2">Cellular thylakoid membrane</location>
        <topology evidence="2">Peripheral membrane protein</topology>
    </subcellularLocation>
</comment>
<comment type="similarity">
    <text evidence="2">Belongs to the ATPase alpha/beta chains family.</text>
</comment>
<reference key="1">
    <citation type="journal article" date="1987" name="J. Mol. Biol.">
        <title>The organization and sequence of the genes for ATP synthase subunits in the cyanobacterium Synechococcus 6301. Support for an endosymbiotic origin of chloroplasts.</title>
        <authorList>
            <person name="Cozens A.L."/>
            <person name="Walker J.E."/>
        </authorList>
    </citation>
    <scope>NUCLEOTIDE SEQUENCE [GENOMIC DNA]</scope>
</reference>
<reference key="2">
    <citation type="journal article" date="2007" name="Photosyn. Res.">
        <title>Complete nucleotide sequence of the freshwater unicellular cyanobacterium Synechococcus elongatus PCC 6301 chromosome: gene content and organization.</title>
        <authorList>
            <person name="Sugita C."/>
            <person name="Ogata K."/>
            <person name="Shikata M."/>
            <person name="Jikuya H."/>
            <person name="Takano J."/>
            <person name="Furumichi M."/>
            <person name="Kanehisa M."/>
            <person name="Omata T."/>
            <person name="Sugiura M."/>
            <person name="Sugita M."/>
        </authorList>
    </citation>
    <scope>NUCLEOTIDE SEQUENCE [LARGE SCALE GENOMIC DNA]</scope>
    <source>
        <strain>ATCC 27144 / PCC 6301 / SAUG 1402/1</strain>
    </source>
</reference>
<gene>
    <name evidence="2" type="primary">atpA</name>
    <name type="ordered locus">syc1177_c</name>
</gene>
<protein>
    <recommendedName>
        <fullName evidence="2">ATP synthase subunit alpha</fullName>
        <ecNumber evidence="2">7.1.2.2</ecNumber>
    </recommendedName>
    <alternativeName>
        <fullName evidence="2">ATP synthase F1 sector subunit alpha</fullName>
    </alternativeName>
    <alternativeName>
        <fullName evidence="2">F-ATPase subunit alpha</fullName>
    </alternativeName>
</protein>
<feature type="chain" id="PRO_0000144361" description="ATP synthase subunit alpha">
    <location>
        <begin position="1"/>
        <end position="505"/>
    </location>
</feature>
<feature type="binding site" evidence="2">
    <location>
        <begin position="170"/>
        <end position="177"/>
    </location>
    <ligand>
        <name>ATP</name>
        <dbReference type="ChEBI" id="CHEBI:30616"/>
    </ligand>
</feature>
<feature type="site" description="Required for activity" evidence="2">
    <location>
        <position position="363"/>
    </location>
</feature>
<proteinExistence type="inferred from homology"/>
<evidence type="ECO:0000250" key="1"/>
<evidence type="ECO:0000255" key="2">
    <source>
        <dbReference type="HAMAP-Rule" id="MF_01346"/>
    </source>
</evidence>
<keyword id="KW-0066">ATP synthesis</keyword>
<keyword id="KW-0067">ATP-binding</keyword>
<keyword id="KW-0139">CF(1)</keyword>
<keyword id="KW-0375">Hydrogen ion transport</keyword>
<keyword id="KW-0406">Ion transport</keyword>
<keyword id="KW-0472">Membrane</keyword>
<keyword id="KW-0547">Nucleotide-binding</keyword>
<keyword id="KW-0793">Thylakoid</keyword>
<keyword id="KW-1278">Translocase</keyword>
<keyword id="KW-0813">Transport</keyword>
<dbReference type="EC" id="7.1.2.2" evidence="2"/>
<dbReference type="EMBL" id="X05302">
    <property type="protein sequence ID" value="CAA28928.1"/>
    <property type="molecule type" value="Genomic_DNA"/>
</dbReference>
<dbReference type="EMBL" id="AP008231">
    <property type="protein sequence ID" value="BAD79367.1"/>
    <property type="molecule type" value="Genomic_DNA"/>
</dbReference>
<dbReference type="PIR" id="S10831">
    <property type="entry name" value="PWYCA"/>
</dbReference>
<dbReference type="RefSeq" id="WP_011243489.1">
    <property type="nucleotide sequence ID" value="NZ_CP085785.1"/>
</dbReference>
<dbReference type="SMR" id="P08449"/>
<dbReference type="GeneID" id="72429152"/>
<dbReference type="KEGG" id="syc:syc1177_c"/>
<dbReference type="eggNOG" id="COG0056">
    <property type="taxonomic scope" value="Bacteria"/>
</dbReference>
<dbReference type="Proteomes" id="UP000001175">
    <property type="component" value="Chromosome"/>
</dbReference>
<dbReference type="GO" id="GO:0031676">
    <property type="term" value="C:plasma membrane-derived thylakoid membrane"/>
    <property type="evidence" value="ECO:0007669"/>
    <property type="project" value="UniProtKB-SubCell"/>
</dbReference>
<dbReference type="GO" id="GO:0045259">
    <property type="term" value="C:proton-transporting ATP synthase complex"/>
    <property type="evidence" value="ECO:0007669"/>
    <property type="project" value="UniProtKB-KW"/>
</dbReference>
<dbReference type="GO" id="GO:0043531">
    <property type="term" value="F:ADP binding"/>
    <property type="evidence" value="ECO:0007669"/>
    <property type="project" value="TreeGrafter"/>
</dbReference>
<dbReference type="GO" id="GO:0005524">
    <property type="term" value="F:ATP binding"/>
    <property type="evidence" value="ECO:0007669"/>
    <property type="project" value="UniProtKB-UniRule"/>
</dbReference>
<dbReference type="GO" id="GO:0046933">
    <property type="term" value="F:proton-transporting ATP synthase activity, rotational mechanism"/>
    <property type="evidence" value="ECO:0007669"/>
    <property type="project" value="UniProtKB-UniRule"/>
</dbReference>
<dbReference type="CDD" id="cd18113">
    <property type="entry name" value="ATP-synt_F1_alpha_C"/>
    <property type="match status" value="1"/>
</dbReference>
<dbReference type="CDD" id="cd18116">
    <property type="entry name" value="ATP-synt_F1_alpha_N"/>
    <property type="match status" value="1"/>
</dbReference>
<dbReference type="CDD" id="cd01132">
    <property type="entry name" value="F1-ATPase_alpha_CD"/>
    <property type="match status" value="1"/>
</dbReference>
<dbReference type="FunFam" id="1.20.150.20:FF:000001">
    <property type="entry name" value="ATP synthase subunit alpha"/>
    <property type="match status" value="1"/>
</dbReference>
<dbReference type="FunFam" id="2.40.30.20:FF:000001">
    <property type="entry name" value="ATP synthase subunit alpha"/>
    <property type="match status" value="1"/>
</dbReference>
<dbReference type="FunFam" id="3.40.50.300:FF:000002">
    <property type="entry name" value="ATP synthase subunit alpha"/>
    <property type="match status" value="1"/>
</dbReference>
<dbReference type="Gene3D" id="2.40.30.20">
    <property type="match status" value="1"/>
</dbReference>
<dbReference type="Gene3D" id="1.20.150.20">
    <property type="entry name" value="ATP synthase alpha/beta chain, C-terminal domain"/>
    <property type="match status" value="1"/>
</dbReference>
<dbReference type="Gene3D" id="3.40.50.300">
    <property type="entry name" value="P-loop containing nucleotide triphosphate hydrolases"/>
    <property type="match status" value="1"/>
</dbReference>
<dbReference type="HAMAP" id="MF_01346">
    <property type="entry name" value="ATP_synth_alpha_bact"/>
    <property type="match status" value="1"/>
</dbReference>
<dbReference type="InterPro" id="IPR023366">
    <property type="entry name" value="ATP_synth_asu-like_sf"/>
</dbReference>
<dbReference type="InterPro" id="IPR000793">
    <property type="entry name" value="ATP_synth_asu_C"/>
</dbReference>
<dbReference type="InterPro" id="IPR038376">
    <property type="entry name" value="ATP_synth_asu_C_sf"/>
</dbReference>
<dbReference type="InterPro" id="IPR033732">
    <property type="entry name" value="ATP_synth_F1_a_nt-bd_dom"/>
</dbReference>
<dbReference type="InterPro" id="IPR005294">
    <property type="entry name" value="ATP_synth_F1_asu"/>
</dbReference>
<dbReference type="InterPro" id="IPR020003">
    <property type="entry name" value="ATPase_a/bsu_AS"/>
</dbReference>
<dbReference type="InterPro" id="IPR004100">
    <property type="entry name" value="ATPase_F1/V1/A1_a/bsu_N"/>
</dbReference>
<dbReference type="InterPro" id="IPR036121">
    <property type="entry name" value="ATPase_F1/V1/A1_a/bsu_N_sf"/>
</dbReference>
<dbReference type="InterPro" id="IPR000194">
    <property type="entry name" value="ATPase_F1/V1/A1_a/bsu_nucl-bd"/>
</dbReference>
<dbReference type="InterPro" id="IPR027417">
    <property type="entry name" value="P-loop_NTPase"/>
</dbReference>
<dbReference type="NCBIfam" id="TIGR00962">
    <property type="entry name" value="atpA"/>
    <property type="match status" value="1"/>
</dbReference>
<dbReference type="NCBIfam" id="NF009884">
    <property type="entry name" value="PRK13343.1"/>
    <property type="match status" value="1"/>
</dbReference>
<dbReference type="PANTHER" id="PTHR48082">
    <property type="entry name" value="ATP SYNTHASE SUBUNIT ALPHA, MITOCHONDRIAL"/>
    <property type="match status" value="1"/>
</dbReference>
<dbReference type="PANTHER" id="PTHR48082:SF2">
    <property type="entry name" value="ATP SYNTHASE SUBUNIT ALPHA, MITOCHONDRIAL"/>
    <property type="match status" value="1"/>
</dbReference>
<dbReference type="Pfam" id="PF00006">
    <property type="entry name" value="ATP-synt_ab"/>
    <property type="match status" value="1"/>
</dbReference>
<dbReference type="Pfam" id="PF00306">
    <property type="entry name" value="ATP-synt_ab_C"/>
    <property type="match status" value="1"/>
</dbReference>
<dbReference type="Pfam" id="PF02874">
    <property type="entry name" value="ATP-synt_ab_N"/>
    <property type="match status" value="1"/>
</dbReference>
<dbReference type="PIRSF" id="PIRSF039088">
    <property type="entry name" value="F_ATPase_subunit_alpha"/>
    <property type="match status" value="1"/>
</dbReference>
<dbReference type="SUPFAM" id="SSF47917">
    <property type="entry name" value="C-terminal domain of alpha and beta subunits of F1 ATP synthase"/>
    <property type="match status" value="1"/>
</dbReference>
<dbReference type="SUPFAM" id="SSF50615">
    <property type="entry name" value="N-terminal domain of alpha and beta subunits of F1 ATP synthase"/>
    <property type="match status" value="1"/>
</dbReference>
<dbReference type="SUPFAM" id="SSF52540">
    <property type="entry name" value="P-loop containing nucleoside triphosphate hydrolases"/>
    <property type="match status" value="1"/>
</dbReference>
<dbReference type="PROSITE" id="PS00152">
    <property type="entry name" value="ATPASE_ALPHA_BETA"/>
    <property type="match status" value="1"/>
</dbReference>
<organism>
    <name type="scientific">Synechococcus sp. (strain ATCC 27144 / PCC 6301 / SAUG 1402/1)</name>
    <name type="common">Anacystis nidulans</name>
    <dbReference type="NCBI Taxonomy" id="269084"/>
    <lineage>
        <taxon>Bacteria</taxon>
        <taxon>Bacillati</taxon>
        <taxon>Cyanobacteriota</taxon>
        <taxon>Cyanophyceae</taxon>
        <taxon>Synechococcales</taxon>
        <taxon>Synechococcaceae</taxon>
        <taxon>Synechococcus</taxon>
    </lineage>
</organism>
<sequence length="505" mass="54073">MVSIRPDEISSIIRQQIEQYSQDVKVENVGTVLQVGDGIARIYGLQQVMSGELVEFEDGTTGIALNLEEDNVGAVLMGEGRNIQEGSTVKATGKIAQIPVGDALVGRVVSPLGAPLDGKGEIAATENRLIESPAPGIIARRSVHEPMQTGITAIDAMIPIGRGQRELIIGDRQTGKTAIAIDTILNQKGEDVICVYVAIGQKASSVANIIEVLRERGALDYTVVVAANASEPATLQYLAPYAGAAIAEYFMYKGKATLVIYDDLTKQAQAYRQMSLLLRRPPGREAYPGDVFYLHSRLLERAAKLSDALGGGSMTALPVIETQAGDVSAYIPTNVISITDGQIFLSSDLFNSGLRPAINVGISVSRVGSAAQTKAIKKIAGTLKLELAQFDELAAFAQFASDLDKATQNQLARGQRLRELLKQPQFSPLILAEQVAVVYAGVKGLIDEIPVNQVTAFVSELRSYLKTSKPEFIEKVQSSKQLDDAAEALLKEAIAEVKKNILAAV</sequence>